<evidence type="ECO:0000250" key="1"/>
<evidence type="ECO:0000250" key="2">
    <source>
        <dbReference type="UniProtKB" id="O75324"/>
    </source>
</evidence>
<evidence type="ECO:0000250" key="3">
    <source>
        <dbReference type="UniProtKB" id="P61807"/>
    </source>
</evidence>
<evidence type="ECO:0000255" key="4"/>
<evidence type="ECO:0000305" key="5"/>
<accession>Q17Q87</accession>
<proteinExistence type="inferred from homology"/>
<organism>
    <name type="scientific">Bos taurus</name>
    <name type="common">Bovine</name>
    <dbReference type="NCBI Taxonomy" id="9913"/>
    <lineage>
        <taxon>Eukaryota</taxon>
        <taxon>Metazoa</taxon>
        <taxon>Chordata</taxon>
        <taxon>Craniata</taxon>
        <taxon>Vertebrata</taxon>
        <taxon>Euteleostomi</taxon>
        <taxon>Mammalia</taxon>
        <taxon>Eutheria</taxon>
        <taxon>Laurasiatheria</taxon>
        <taxon>Artiodactyla</taxon>
        <taxon>Ruminantia</taxon>
        <taxon>Pecora</taxon>
        <taxon>Bovidae</taxon>
        <taxon>Bovinae</taxon>
        <taxon>Bos</taxon>
    </lineage>
</organism>
<comment type="function">
    <text evidence="2">Plays a role in the toxic effects of organotins. Plays a role in endosomal maturation.</text>
</comment>
<comment type="subunit">
    <text evidence="2">Monomer.</text>
</comment>
<comment type="subcellular location">
    <subcellularLocation>
        <location evidence="2">Mitochondrion outer membrane</location>
        <topology evidence="2">Single-pass membrane protein</topology>
    </subcellularLocation>
</comment>
<comment type="similarity">
    <text evidence="5">Belongs to the stannin family.</text>
</comment>
<feature type="chain" id="PRO_0000282601" description="Stannin">
    <location>
        <begin position="1"/>
        <end position="87"/>
    </location>
</feature>
<feature type="topological domain" description="Mitochondrial intermembrane" evidence="1">
    <location>
        <begin position="1"/>
        <end position="10"/>
    </location>
</feature>
<feature type="transmembrane region" description="Helical" evidence="4">
    <location>
        <begin position="11"/>
        <end position="31"/>
    </location>
</feature>
<feature type="topological domain" description="Cytoplasmic" evidence="1">
    <location>
        <begin position="32"/>
        <end position="87"/>
    </location>
</feature>
<feature type="modified residue" description="Phosphoserine" evidence="3">
    <location>
        <position position="49"/>
    </location>
</feature>
<keyword id="KW-0472">Membrane</keyword>
<keyword id="KW-0496">Mitochondrion</keyword>
<keyword id="KW-1000">Mitochondrion outer membrane</keyword>
<keyword id="KW-0597">Phosphoprotein</keyword>
<keyword id="KW-1185">Reference proteome</keyword>
<keyword id="KW-0812">Transmembrane</keyword>
<keyword id="KW-1133">Transmembrane helix</keyword>
<sequence length="87" mass="9396">MSIMDHSPTTGVVTVIVILIAIAALGALILGCWCYLRLQRISQSEDEESIVGDGETKEPFLLVQYSAKGPCVERKAKLTPNGPEVHS</sequence>
<reference key="1">
    <citation type="submission" date="2006-06" db="EMBL/GenBank/DDBJ databases">
        <authorList>
            <consortium name="NIH - Mammalian Gene Collection (MGC) project"/>
        </authorList>
    </citation>
    <scope>NUCLEOTIDE SEQUENCE [LARGE SCALE MRNA]</scope>
    <source>
        <strain>Hereford</strain>
        <tissue>Brain cortex</tissue>
    </source>
</reference>
<protein>
    <recommendedName>
        <fullName>Stannin</fullName>
    </recommendedName>
</protein>
<gene>
    <name type="primary">SNN</name>
</gene>
<name>SNN_BOVIN</name>
<dbReference type="EMBL" id="BC118488">
    <property type="protein sequence ID" value="AAI18489.1"/>
    <property type="molecule type" value="mRNA"/>
</dbReference>
<dbReference type="RefSeq" id="NP_001107194.1">
    <property type="nucleotide sequence ID" value="NM_001113722.1"/>
</dbReference>
<dbReference type="RefSeq" id="XP_010817430.1">
    <property type="nucleotide sequence ID" value="XM_010819128.2"/>
</dbReference>
<dbReference type="BMRB" id="Q17Q87"/>
<dbReference type="SMR" id="Q17Q87"/>
<dbReference type="FunCoup" id="Q17Q87">
    <property type="interactions" value="1072"/>
</dbReference>
<dbReference type="STRING" id="9913.ENSBTAP00000062234"/>
<dbReference type="PaxDb" id="9913-ENSBTAP00000037299"/>
<dbReference type="GeneID" id="615361"/>
<dbReference type="KEGG" id="bta:615361"/>
<dbReference type="CTD" id="8303"/>
<dbReference type="VEuPathDB" id="HostDB:ENSBTAG00000054404"/>
<dbReference type="eggNOG" id="ENOG502S14Z">
    <property type="taxonomic scope" value="Eukaryota"/>
</dbReference>
<dbReference type="HOGENOM" id="CLU_2711160_0_0_1"/>
<dbReference type="InParanoid" id="Q17Q87"/>
<dbReference type="OMA" id="PCMERKA"/>
<dbReference type="OrthoDB" id="9448252at2759"/>
<dbReference type="TreeFam" id="TF336244"/>
<dbReference type="Proteomes" id="UP000009136">
    <property type="component" value="Chromosome 25"/>
</dbReference>
<dbReference type="Bgee" id="ENSBTAG00000054404">
    <property type="expression patterns" value="Expressed in neutrophil and 106 other cell types or tissues"/>
</dbReference>
<dbReference type="GO" id="GO:0016020">
    <property type="term" value="C:membrane"/>
    <property type="evidence" value="ECO:0000318"/>
    <property type="project" value="GO_Central"/>
</dbReference>
<dbReference type="GO" id="GO:0005741">
    <property type="term" value="C:mitochondrial outer membrane"/>
    <property type="evidence" value="ECO:0007669"/>
    <property type="project" value="UniProtKB-SubCell"/>
</dbReference>
<dbReference type="GO" id="GO:0046872">
    <property type="term" value="F:metal ion binding"/>
    <property type="evidence" value="ECO:0007669"/>
    <property type="project" value="Ensembl"/>
</dbReference>
<dbReference type="CDD" id="cd20257">
    <property type="entry name" value="Stannin"/>
    <property type="match status" value="1"/>
</dbReference>
<dbReference type="FunFam" id="4.10.280.20:FF:000001">
    <property type="entry name" value="stannin"/>
    <property type="match status" value="1"/>
</dbReference>
<dbReference type="Gene3D" id="4.10.280.20">
    <property type="entry name" value="membrane protein stannin"/>
    <property type="match status" value="1"/>
</dbReference>
<dbReference type="InterPro" id="IPR015137">
    <property type="entry name" value="SNN_cytoplasm"/>
</dbReference>
<dbReference type="InterPro" id="IPR015136">
    <property type="entry name" value="SNN_linker"/>
</dbReference>
<dbReference type="InterPro" id="IPR015135">
    <property type="entry name" value="SNN_transmemb"/>
</dbReference>
<dbReference type="InterPro" id="IPR038747">
    <property type="entry name" value="Stannin"/>
</dbReference>
<dbReference type="InterPro" id="IPR027435">
    <property type="entry name" value="Stannin_sf"/>
</dbReference>
<dbReference type="PANTHER" id="PTHR28564">
    <property type="entry name" value="STANNIN"/>
    <property type="match status" value="1"/>
</dbReference>
<dbReference type="PANTHER" id="PTHR28564:SF1">
    <property type="entry name" value="STANNIN"/>
    <property type="match status" value="1"/>
</dbReference>
<dbReference type="Pfam" id="PF09051">
    <property type="entry name" value="SNN_cytoplasm"/>
    <property type="match status" value="1"/>
</dbReference>
<dbReference type="Pfam" id="PF09050">
    <property type="entry name" value="SNN_linker"/>
    <property type="match status" value="1"/>
</dbReference>
<dbReference type="Pfam" id="PF09049">
    <property type="entry name" value="SNN_transmemb"/>
    <property type="match status" value="1"/>
</dbReference>